<organism>
    <name type="scientific">Cyberlindnera jadinii</name>
    <name type="common">Torula yeast</name>
    <name type="synonym">Pichia jadinii</name>
    <dbReference type="NCBI Taxonomy" id="4903"/>
    <lineage>
        <taxon>Eukaryota</taxon>
        <taxon>Fungi</taxon>
        <taxon>Dikarya</taxon>
        <taxon>Ascomycota</taxon>
        <taxon>Saccharomycotina</taxon>
        <taxon>Saccharomycetes</taxon>
        <taxon>Phaffomycetales</taxon>
        <taxon>Phaffomycetaceae</taxon>
        <taxon>Cyberlindnera</taxon>
    </lineage>
</organism>
<evidence type="ECO:0000250" key="1"/>
<evidence type="ECO:0000255" key="2">
    <source>
        <dbReference type="PROSITE-ProRule" id="PRU01234"/>
    </source>
</evidence>
<evidence type="ECO:0000256" key="3">
    <source>
        <dbReference type="SAM" id="MobiDB-lite"/>
    </source>
</evidence>
<evidence type="ECO:0000305" key="4"/>
<dbReference type="EMBL" id="AJ632341">
    <property type="protein sequence ID" value="CAG15349.1"/>
    <property type="molecule type" value="Genomic_DNA"/>
</dbReference>
<dbReference type="SMR" id="Q6ZZF5"/>
<dbReference type="GO" id="GO:0005739">
    <property type="term" value="C:mitochondrion"/>
    <property type="evidence" value="ECO:0007669"/>
    <property type="project" value="UniProtKB-SubCell"/>
</dbReference>
<dbReference type="GO" id="GO:0005634">
    <property type="term" value="C:nucleus"/>
    <property type="evidence" value="ECO:0007669"/>
    <property type="project" value="TreeGrafter"/>
</dbReference>
<dbReference type="GO" id="GO:0006979">
    <property type="term" value="P:response to oxidative stress"/>
    <property type="evidence" value="ECO:0007669"/>
    <property type="project" value="TreeGrafter"/>
</dbReference>
<dbReference type="InterPro" id="IPR006571">
    <property type="entry name" value="TLDc_dom"/>
</dbReference>
<dbReference type="PANTHER" id="PTHR23354:SF62">
    <property type="entry name" value="MUSTARD, ISOFORM V"/>
    <property type="match status" value="1"/>
</dbReference>
<dbReference type="PANTHER" id="PTHR23354">
    <property type="entry name" value="NUCLEOLAR PROTEIN 7/ESTROGEN RECEPTOR COACTIVATOR-RELATED"/>
    <property type="match status" value="1"/>
</dbReference>
<dbReference type="Pfam" id="PF07534">
    <property type="entry name" value="TLD"/>
    <property type="match status" value="1"/>
</dbReference>
<dbReference type="SMART" id="SM00584">
    <property type="entry name" value="TLDc"/>
    <property type="match status" value="1"/>
</dbReference>
<dbReference type="PROSITE" id="PS51886">
    <property type="entry name" value="TLDC"/>
    <property type="match status" value="1"/>
</dbReference>
<proteinExistence type="inferred from homology"/>
<sequence>MSFFKRKSKSPSPSAQPSNIDTYVPPPPIPIELDGYSQTTKNRLMSTELAEDIRNILPMRYQVRTNWHLVYSLEQHGASLHTLYRMMKPLTRYDKNGYILVIRDLKNSQFGCFVNEYLHPTDLRRFYGNGECFLWKSKRQGDDVAEEMGGEANHIQFKAFPYTGLNDFIIYCTSEF</sequence>
<keyword id="KW-0496">Mitochondrion</keyword>
<name>OXR1_CYBJA</name>
<gene>
    <name type="primary">OXR1</name>
</gene>
<reference key="1">
    <citation type="journal article" date="2006" name="DNA Seq.">
        <title>Identification of the genes GPD1 and GPD2 of Pichia jadinii.</title>
        <authorList>
            <person name="Ostermann K."/>
            <person name="Richter M."/>
            <person name="Zscharnack M."/>
            <person name="Rothe R."/>
            <person name="Walther T."/>
            <person name="Roedel G."/>
        </authorList>
    </citation>
    <scope>NUCLEOTIDE SEQUENCE [GENOMIC DNA]</scope>
    <source>
        <strain>ATCC 9950 / CBS 5609 / DSM 2361 / NBRC 0998 / NRRL Y-900</strain>
    </source>
</reference>
<feature type="chain" id="PRO_0000058119" description="Oxidation resistance protein 1">
    <location>
        <begin position="1"/>
        <end position="176" status="greater than"/>
    </location>
</feature>
<feature type="domain" description="TLDc" evidence="2">
    <location>
        <begin position="43"/>
        <end position="176" status="greater than"/>
    </location>
</feature>
<feature type="region of interest" description="Disordered" evidence="3">
    <location>
        <begin position="1"/>
        <end position="26"/>
    </location>
</feature>
<feature type="non-terminal residue">
    <location>
        <position position="176"/>
    </location>
</feature>
<protein>
    <recommendedName>
        <fullName>Oxidation resistance protein 1</fullName>
    </recommendedName>
</protein>
<comment type="function">
    <text evidence="1">May be involved in protection from oxidative damage.</text>
</comment>
<comment type="subcellular location">
    <subcellularLocation>
        <location evidence="1">Mitochondrion</location>
    </subcellularLocation>
</comment>
<comment type="similarity">
    <text evidence="4">Belongs to the OXR1 family.</text>
</comment>
<accession>Q6ZZF5</accession>